<gene>
    <name evidence="1" type="primary">gH</name>
    <name type="ORF">UL22</name>
</gene>
<protein>
    <recommendedName>
        <fullName evidence="1">Envelope glycoprotein H</fullName>
        <shortName evidence="1">gH</shortName>
    </recommendedName>
</protein>
<reference key="1">
    <citation type="journal article" date="2000" name="J. Biochem. Mol. Biol.">
        <title>High level production of glycoprotein H of HSV-1(F) using HcNPV vector system.</title>
        <authorList>
            <person name="Kang H."/>
            <person name="Cha S.C."/>
            <person name="Han Y.J."/>
            <person name="Park I.H."/>
            <person name="Lee M.J."/>
            <person name="Byun S.M."/>
            <person name="Lee H.H."/>
        </authorList>
    </citation>
    <scope>NUCLEOTIDE SEQUENCE [GENOMIC DNA]</scope>
</reference>
<reference key="2">
    <citation type="journal article" date="2008" name="J. Virol.">
        <title>Comprehensive characterization of extracellular herpes simplex virus type 1 virions.</title>
        <authorList>
            <person name="Loret S."/>
            <person name="Guay G."/>
            <person name="Lippe R."/>
        </authorList>
    </citation>
    <scope>SUBCELLULAR LOCATION</scope>
</reference>
<reference key="3">
    <citation type="journal article" date="2009" name="J. Biol. Chem.">
        <title>Herpes simplex virus gD forms distinct complexes with fusion executors gB and gH/gL in part through the C-terminal profusion domain.</title>
        <authorList>
            <person name="Gianni T."/>
            <person name="Amasio M."/>
            <person name="Campadelli-Fiume G."/>
        </authorList>
    </citation>
    <scope>FUNCTION</scope>
</reference>
<accession>Q9DHD5</accession>
<keyword id="KW-1169">Fusion of virus membrane with host cell membrane</keyword>
<keyword id="KW-1168">Fusion of virus membrane with host membrane</keyword>
<keyword id="KW-0325">Glycoprotein</keyword>
<keyword id="KW-1032">Host cell membrane</keyword>
<keyword id="KW-1039">Host endosome</keyword>
<keyword id="KW-1043">Host membrane</keyword>
<keyword id="KW-0472">Membrane</keyword>
<keyword id="KW-0730">Sialic acid</keyword>
<keyword id="KW-0732">Signal</keyword>
<keyword id="KW-0812">Transmembrane</keyword>
<keyword id="KW-1133">Transmembrane helix</keyword>
<keyword id="KW-0261">Viral envelope protein</keyword>
<keyword id="KW-1162">Viral penetration into host cytoplasm</keyword>
<keyword id="KW-0946">Virion</keyword>
<keyword id="KW-1160">Virus entry into host cell</keyword>
<dbReference type="EMBL" id="AF296257">
    <property type="protein sequence ID" value="AAG17895.1"/>
    <property type="molecule type" value="Genomic_DNA"/>
</dbReference>
<dbReference type="BMRB" id="Q9DHD5"/>
<dbReference type="SMR" id="Q9DHD5"/>
<dbReference type="GlyCosmos" id="Q9DHD5">
    <property type="glycosylation" value="7 sites, No reported glycans"/>
</dbReference>
<dbReference type="GO" id="GO:0044175">
    <property type="term" value="C:host cell endosome membrane"/>
    <property type="evidence" value="ECO:0007669"/>
    <property type="project" value="UniProtKB-SubCell"/>
</dbReference>
<dbReference type="GO" id="GO:0020002">
    <property type="term" value="C:host cell plasma membrane"/>
    <property type="evidence" value="ECO:0007669"/>
    <property type="project" value="UniProtKB-SubCell"/>
</dbReference>
<dbReference type="GO" id="GO:0016020">
    <property type="term" value="C:membrane"/>
    <property type="evidence" value="ECO:0007669"/>
    <property type="project" value="UniProtKB-KW"/>
</dbReference>
<dbReference type="GO" id="GO:0019031">
    <property type="term" value="C:viral envelope"/>
    <property type="evidence" value="ECO:0007669"/>
    <property type="project" value="UniProtKB-KW"/>
</dbReference>
<dbReference type="GO" id="GO:0055036">
    <property type="term" value="C:virion membrane"/>
    <property type="evidence" value="ECO:0007669"/>
    <property type="project" value="UniProtKB-SubCell"/>
</dbReference>
<dbReference type="GO" id="GO:0019064">
    <property type="term" value="P:fusion of virus membrane with host plasma membrane"/>
    <property type="evidence" value="ECO:0007669"/>
    <property type="project" value="UniProtKB-KW"/>
</dbReference>
<dbReference type="GO" id="GO:0046718">
    <property type="term" value="P:symbiont entry into host cell"/>
    <property type="evidence" value="ECO:0007669"/>
    <property type="project" value="UniProtKB-KW"/>
</dbReference>
<dbReference type="Gene3D" id="1.20.58.1340">
    <property type="match status" value="1"/>
</dbReference>
<dbReference type="Gene3D" id="3.10.360.40">
    <property type="match status" value="1"/>
</dbReference>
<dbReference type="Gene3D" id="3.30.500.50">
    <property type="match status" value="1"/>
</dbReference>
<dbReference type="Gene3D" id="2.60.40.3190">
    <property type="entry name" value="Herpesvirus glycoprotein H, C-terminal domain"/>
    <property type="match status" value="1"/>
</dbReference>
<dbReference type="HAMAP" id="MF_04033">
    <property type="entry name" value="HSV_GH"/>
    <property type="match status" value="1"/>
</dbReference>
<dbReference type="InterPro" id="IPR003493">
    <property type="entry name" value="Herpes_gH"/>
</dbReference>
<dbReference type="InterPro" id="IPR035305">
    <property type="entry name" value="Herpes_glycoH_C"/>
</dbReference>
<dbReference type="InterPro" id="IPR038172">
    <property type="entry name" value="Herpes_glycoH_C_sf"/>
</dbReference>
<dbReference type="Pfam" id="PF17488">
    <property type="entry name" value="Herpes_glycoH_C"/>
    <property type="match status" value="1"/>
</dbReference>
<dbReference type="Pfam" id="PF02489">
    <property type="entry name" value="Herpes_glycop_H"/>
    <property type="match status" value="1"/>
</dbReference>
<feature type="signal peptide" evidence="1">
    <location>
        <begin position="1"/>
        <end position="18"/>
    </location>
</feature>
<feature type="chain" id="PRO_0000385471" description="Envelope glycoprotein H" evidence="1">
    <location>
        <begin position="19"/>
        <end position="838"/>
    </location>
</feature>
<feature type="topological domain" description="Virion surface" evidence="1">
    <location>
        <begin position="19"/>
        <end position="803"/>
    </location>
</feature>
<feature type="transmembrane region" description="Helical" evidence="1">
    <location>
        <begin position="804"/>
        <end position="824"/>
    </location>
</feature>
<feature type="topological domain" description="Intravirion" evidence="1">
    <location>
        <begin position="825"/>
        <end position="838"/>
    </location>
</feature>
<feature type="region of interest" description="Disordered" evidence="2">
    <location>
        <begin position="174"/>
        <end position="204"/>
    </location>
</feature>
<feature type="region of interest" description="Interaction with gL" evidence="1">
    <location>
        <begin position="259"/>
        <end position="323"/>
    </location>
</feature>
<feature type="glycosylation site" description="N-linked (GlcNAc...) asparagine; by host" evidence="1">
    <location>
        <position position="73"/>
    </location>
</feature>
<feature type="glycosylation site" description="N-linked (GlcNAc...) asparagine; by host" evidence="1">
    <location>
        <position position="120"/>
    </location>
</feature>
<feature type="glycosylation site" description="N-linked (GlcNAc...) asparagine; by host" evidence="1">
    <location>
        <position position="216"/>
    </location>
</feature>
<feature type="glycosylation site" description="N-linked (GlcNAc...) asparagine; by host" evidence="1">
    <location>
        <position position="332"/>
    </location>
</feature>
<feature type="glycosylation site" description="N-linked (GlcNAc...) asparagine; by host" evidence="1">
    <location>
        <position position="437"/>
    </location>
</feature>
<feature type="glycosylation site" description="N-linked (GlcNAc...) asparagine; by host" evidence="1">
    <location>
        <position position="670"/>
    </location>
</feature>
<feature type="glycosylation site" description="N-linked (GlcNAc...) asparagine; by host" evidence="1">
    <location>
        <position position="784"/>
    </location>
</feature>
<name>GH_HHV1F</name>
<comment type="function">
    <text evidence="1 4">The heterodimer glycoprotein H-glycoprotein L is required for the fusion of viral and plasma membranes leading to virus entry into the host cell. Following initial binding to host receptor, membrane fusion is mediated by the fusion machinery composed of gB and the heterodimer gH/gL. May also be involved in the fusion between the virion envelope and the outer nuclear membrane during virion morphogenesis.</text>
</comment>
<comment type="subunit">
    <text evidence="1">Interacts with glycoprotein L (gL); this interaction is necessary for the correct processing and cell surface expression of gH. The heterodimer gH/gL seems to interact with gB trimers during fusion.</text>
</comment>
<comment type="subcellular location">
    <subcellularLocation>
        <location evidence="1 3">Virion membrane</location>
        <topology evidence="1 3">Single-pass type I membrane protein</topology>
    </subcellularLocation>
    <subcellularLocation>
        <location evidence="1">Host cell membrane</location>
        <topology evidence="1 3">Single-pass type I membrane protein</topology>
    </subcellularLocation>
    <subcellularLocation>
        <location evidence="1">Host endosome membrane</location>
        <topology evidence="1 3">Single-pass type I membrane protein</topology>
    </subcellularLocation>
    <text evidence="1">During virion morphogenesis, this protein probably accumulates in the endosomes and trans-Golgi where secondary envelopment occurs. It is probably transported to the cell surface from where it is endocytosed and directed to the trans-Golgi network (TGN).</text>
</comment>
<comment type="PTM">
    <text evidence="1">N-glycosylated, O-glycosylated, and sialylated.</text>
</comment>
<comment type="similarity">
    <text evidence="1">Belongs to the herpesviridae glycoprotein H family.</text>
</comment>
<proteinExistence type="inferred from homology"/>
<organismHost>
    <name type="scientific">Homo sapiens</name>
    <name type="common">Human</name>
    <dbReference type="NCBI Taxonomy" id="9606"/>
</organismHost>
<organism>
    <name type="scientific">Human herpesvirus 1 (strain F)</name>
    <name type="common">HHV-1</name>
    <name type="synonym">Human herpes simplex virus 1</name>
    <dbReference type="NCBI Taxonomy" id="10304"/>
    <lineage>
        <taxon>Viruses</taxon>
        <taxon>Duplodnaviria</taxon>
        <taxon>Heunggongvirae</taxon>
        <taxon>Peploviricota</taxon>
        <taxon>Herviviricetes</taxon>
        <taxon>Herpesvirales</taxon>
        <taxon>Orthoherpesviridae</taxon>
        <taxon>Alphaherpesvirinae</taxon>
        <taxon>Simplexvirus</taxon>
        <taxon>Simplexvirus humanalpha1</taxon>
        <taxon>Human herpesvirus 1</taxon>
    </lineage>
</organism>
<sequence>MGNGLWFVGVIILGAAWGQVHDWTEQTDPWFLDGLGMDRMYWRDTNTGRLWLPNTPDPQKPPRGFLAPPDELNLTTASLPLLRWYEERFCFVLVTTAEFPRDPGQLLYIPKTYLLGRPPNASLPAPTTVEPTAQPPPAVAPLKGLLHNPTASVLLRSRAWVTFSAVPDPEALTFPRGDNVATASHPSGPRDTPPPRPPVGARRHPTTELDITHLHNASTTWLATRGLLRSPGRYVYFSPSASTWPVGIWTTGELVLGCDAALVRARYGREFMGLVISMHDSPPAEVMVVPAGQTLDRVGDPADENPPGALPGPPGGPRYRVFVLGSLTRADNGSALDALRRVGGYPEEGTNYAQFLSRAYAEFFSGDAGAEQGPRPPLFWRLTGLLATSGFAFVNAAHANGAVCLSDLLGFLAHSRALAGLAARGAAGCAADSVFFNVSVLDPTARLQLEARLQHLVAEILEREQSLALHALGYQLAFVLDSPSAYDAVAPSAAHLIDALYAEFLGGRVVTTPVVHRALFYASAVLRQPFLAGVPSAVQRERARRSLLIASALCTSDVAAATNADLRTALARADHQKTLFWLPDHFSPCAASLRFDLDESVFILDALAQATRSETPVEVLAQQTHGLASTLTRWAHYNALIRAFVPEASHRCGGQSANVEPRILVPITHNASYVVTHSPLPRGIGYKLTGVDVRRPLFLTYLTATCEGSTRDIESKRLVRTQNQRDLGLVGAVFMRYTPAGEVMSVLLVDTDNTQQQIAAGPTEGAPSVFSSDVPSTALLLFPNGTVIHLLAFDTQPVAAIAPGFLAASALGVVMITAALAGILKVLRTSVPFFWRRE</sequence>
<evidence type="ECO:0000255" key="1">
    <source>
        <dbReference type="HAMAP-Rule" id="MF_04033"/>
    </source>
</evidence>
<evidence type="ECO:0000256" key="2">
    <source>
        <dbReference type="SAM" id="MobiDB-lite"/>
    </source>
</evidence>
<evidence type="ECO:0000269" key="3">
    <source>
    </source>
</evidence>
<evidence type="ECO:0000269" key="4">
    <source>
    </source>
</evidence>